<dbReference type="EMBL" id="CP000253">
    <property type="protein sequence ID" value="ABD31621.1"/>
    <property type="molecule type" value="Genomic_DNA"/>
</dbReference>
<dbReference type="RefSeq" id="WP_000794442.1">
    <property type="nucleotide sequence ID" value="NZ_LS483365.1"/>
</dbReference>
<dbReference type="RefSeq" id="YP_501072.1">
    <property type="nucleotide sequence ID" value="NC_007795.1"/>
</dbReference>
<dbReference type="PDB" id="6U0O">
    <property type="method" value="X-ray"/>
    <property type="resolution" value="2.60 A"/>
    <property type="chains" value="A=1-256"/>
</dbReference>
<dbReference type="PDBsum" id="6U0O"/>
<dbReference type="SMR" id="Q2FVT1"/>
<dbReference type="STRING" id="93061.SAOUHSC_02611"/>
<dbReference type="PaxDb" id="1280-SAXN108_2585"/>
<dbReference type="GeneID" id="3921389"/>
<dbReference type="KEGG" id="sao:SAOUHSC_02611"/>
<dbReference type="PATRIC" id="fig|93061.5.peg.2359"/>
<dbReference type="eggNOG" id="COG1266">
    <property type="taxonomic scope" value="Bacteria"/>
</dbReference>
<dbReference type="HOGENOM" id="CLU_046135_0_0_9"/>
<dbReference type="OrthoDB" id="2413325at2"/>
<dbReference type="PHI-base" id="PHI:7997"/>
<dbReference type="PRO" id="PR:Q2FVT1"/>
<dbReference type="Proteomes" id="UP000008816">
    <property type="component" value="Chromosome"/>
</dbReference>
<dbReference type="GO" id="GO:0005886">
    <property type="term" value="C:plasma membrane"/>
    <property type="evidence" value="ECO:0007669"/>
    <property type="project" value="UniProtKB-SubCell"/>
</dbReference>
<dbReference type="GO" id="GO:0004175">
    <property type="term" value="F:endopeptidase activity"/>
    <property type="evidence" value="ECO:0007669"/>
    <property type="project" value="UniProtKB-ARBA"/>
</dbReference>
<dbReference type="GO" id="GO:0080120">
    <property type="term" value="P:CAAX-box protein maturation"/>
    <property type="evidence" value="ECO:0007669"/>
    <property type="project" value="UniProtKB-ARBA"/>
</dbReference>
<dbReference type="InterPro" id="IPR003675">
    <property type="entry name" value="Rce1/LyrA-like_dom"/>
</dbReference>
<dbReference type="Pfam" id="PF02517">
    <property type="entry name" value="Rce1-like"/>
    <property type="match status" value="1"/>
</dbReference>
<name>LYRA_STAA8</name>
<reference key="1">
    <citation type="book" date="2006" name="Gram positive pathogens, 2nd edition">
        <title>The Staphylococcus aureus NCTC 8325 genome.</title>
        <editorList>
            <person name="Fischetti V."/>
            <person name="Novick R."/>
            <person name="Ferretti J."/>
            <person name="Portnoy D."/>
            <person name="Rood J."/>
        </editorList>
        <authorList>
            <person name="Gillaspy A.F."/>
            <person name="Worrell V."/>
            <person name="Orvis J."/>
            <person name="Roe B.A."/>
            <person name="Dyer D.W."/>
            <person name="Iandolo J.J."/>
        </authorList>
    </citation>
    <scope>NUCLEOTIDE SEQUENCE [LARGE SCALE GENOMIC DNA]</scope>
    <source>
        <strain>NCTC 8325 / PS 47</strain>
    </source>
</reference>
<reference key="2">
    <citation type="journal article" date="2006" name="J. Bacteriol.">
        <title>Staphylococcus aureus mutants with increased lysostaphin resistance.</title>
        <authorList>
            <person name="Gruendling A."/>
            <person name="Missiakas D.M."/>
            <person name="Schneewind O."/>
        </authorList>
    </citation>
    <scope>DISRUPTION PHENOTYPE</scope>
    <scope>MUTAGENESIS OF GLU-135; ARG-139; ARG-196 AND HIS-210</scope>
</reference>
<reference evidence="9" key="3">
    <citation type="journal article" date="2018" name="PLoS Pathog.">
        <title>SpdC, a novel virulence factor, controls histidine kinase activity in Staphylococcus aureus.</title>
        <authorList>
            <person name="Poupel O."/>
            <person name="Proux C."/>
            <person name="Jagla B."/>
            <person name="Msadek T."/>
            <person name="Dubrac S."/>
        </authorList>
    </citation>
    <scope>FUNCTION</scope>
    <scope>INTERACTION WITH WALK AND SAES</scope>
    <scope>SUBCELLULAR LOCATION</scope>
    <scope>INDUCTION</scope>
    <scope>DISRUPTION PHENOTYPE</scope>
    <source>
        <strain evidence="7">HG001</strain>
    </source>
</reference>
<reference evidence="10" key="4">
    <citation type="journal article" date="2021" name="Nat. Microbiol.">
        <title>Structure and reconstitution of a hydrolase complex that may release peptidoglycan from the membrane after polymerization.</title>
        <authorList>
            <person name="Schaefer K."/>
            <person name="Owens T.W."/>
            <person name="Page J.E."/>
            <person name="Santiago M."/>
            <person name="Kahne D."/>
            <person name="Walker S."/>
        </authorList>
    </citation>
    <scope>X-RAY CRYSTALLOGRAPHY (2.60 ANGSTROMS) OF 1-256 IN COMPLEX WITH SAGB</scope>
    <scope>FUNCTION</scope>
    <scope>INTERACTION WITH SAGB</scope>
    <scope>DOMAIN</scope>
    <scope>DISRUPTION PHENOTYPE</scope>
    <scope>MUTAGENESIS OF ASP-106; SER-107 AND GLU-135</scope>
    <source>
        <strain evidence="8">HG003</strain>
    </source>
</reference>
<feature type="chain" id="PRO_0000274827" description="Lysostaphin resistance protein A">
    <location>
        <begin position="1"/>
        <end position="419"/>
    </location>
</feature>
<feature type="transmembrane region" description="Helical" evidence="2">
    <location>
        <begin position="9"/>
        <end position="29"/>
    </location>
</feature>
<feature type="transmembrane region" description="Helical" evidence="2">
    <location>
        <begin position="41"/>
        <end position="61"/>
    </location>
</feature>
<feature type="transmembrane region" description="Helical" evidence="2">
    <location>
        <begin position="84"/>
        <end position="104"/>
    </location>
</feature>
<feature type="transmembrane region" description="Helical" evidence="2">
    <location>
        <begin position="118"/>
        <end position="138"/>
    </location>
</feature>
<feature type="transmembrane region" description="Helical" evidence="2">
    <location>
        <begin position="153"/>
        <end position="173"/>
    </location>
</feature>
<feature type="transmembrane region" description="Helical" evidence="2">
    <location>
        <begin position="175"/>
        <end position="195"/>
    </location>
</feature>
<feature type="transmembrane region" description="Helical" evidence="2">
    <location>
        <begin position="202"/>
        <end position="222"/>
    </location>
</feature>
<feature type="transmembrane region" description="Helical" evidence="2">
    <location>
        <begin position="231"/>
        <end position="251"/>
    </location>
</feature>
<feature type="region of interest" description="Disordered" evidence="3">
    <location>
        <begin position="273"/>
        <end position="419"/>
    </location>
</feature>
<feature type="compositionally biased region" description="Basic and acidic residues" evidence="3">
    <location>
        <begin position="282"/>
        <end position="299"/>
    </location>
</feature>
<feature type="compositionally biased region" description="Basic and acidic residues" evidence="3">
    <location>
        <begin position="323"/>
        <end position="336"/>
    </location>
</feature>
<feature type="compositionally biased region" description="Basic and acidic residues" evidence="3">
    <location>
        <begin position="344"/>
        <end position="353"/>
    </location>
</feature>
<feature type="compositionally biased region" description="Acidic residues" evidence="3">
    <location>
        <begin position="372"/>
        <end position="382"/>
    </location>
</feature>
<feature type="compositionally biased region" description="Basic and acidic residues" evidence="3">
    <location>
        <begin position="383"/>
        <end position="419"/>
    </location>
</feature>
<feature type="mutagenesis site" description="Increases average length of lipid-linked peptidoglycan products, when part of the SagB-SpdC/LyrA complex." evidence="6">
    <original>D</original>
    <variation>C</variation>
    <location>
        <position position="106"/>
    </location>
</feature>
<feature type="mutagenesis site" description="Increases average length of lipid-linked peptidoglycan products, when part of the SagB-SpdC/LyrA complex." evidence="6">
    <original>S</original>
    <variation>C</variation>
    <location>
        <position position="107"/>
    </location>
</feature>
<feature type="mutagenesis site" description="Does not affect lysostaphin resistance. Does not affect SagB-SpdC/LyrA glucosaminidase activity." evidence="4 6">
    <original>E</original>
    <variation>A</variation>
    <location>
        <position position="135"/>
    </location>
</feature>
<feature type="mutagenesis site" description="Does not affect lysostaphin resistance." evidence="4">
    <original>R</original>
    <variation>A</variation>
    <location>
        <position position="139"/>
    </location>
</feature>
<feature type="mutagenesis site" description="Does not affect lysostaphin resistance." evidence="4">
    <original>R</original>
    <variation>A</variation>
    <location>
        <position position="196"/>
    </location>
</feature>
<feature type="mutagenesis site" description="Does not affect lysostaphin resistance." evidence="4">
    <original>H</original>
    <variation>A</variation>
    <location>
        <position position="210"/>
    </location>
</feature>
<gene>
    <name type="primary">lyrA</name>
    <name evidence="1 7" type="synonym">spdC</name>
    <name type="ordered locus">SAOUHSC_02611</name>
</gene>
<protein>
    <recommendedName>
        <fullName>Lysostaphin resistance protein A</fullName>
    </recommendedName>
    <alternativeName>
        <fullName evidence="1">Abortive infectivity domain-containing protein</fullName>
    </alternativeName>
    <alternativeName>
        <fullName evidence="7">Surface protein display C</fullName>
    </alternativeName>
</protein>
<evidence type="ECO:0000250" key="1">
    <source>
        <dbReference type="UniProtKB" id="A0A0H3KA40"/>
    </source>
</evidence>
<evidence type="ECO:0000255" key="2"/>
<evidence type="ECO:0000256" key="3">
    <source>
        <dbReference type="SAM" id="MobiDB-lite"/>
    </source>
</evidence>
<evidence type="ECO:0000269" key="4">
    <source>
    </source>
</evidence>
<evidence type="ECO:0000269" key="5">
    <source>
    </source>
</evidence>
<evidence type="ECO:0000269" key="6">
    <source>
    </source>
</evidence>
<evidence type="ECO:0000303" key="7">
    <source>
    </source>
</evidence>
<evidence type="ECO:0000303" key="8">
    <source>
    </source>
</evidence>
<evidence type="ECO:0000305" key="9"/>
<evidence type="ECO:0007829" key="10">
    <source>
        <dbReference type="PDB" id="6U0O"/>
    </source>
</evidence>
<organism>
    <name type="scientific">Staphylococcus aureus (strain NCTC 8325 / PS 47)</name>
    <dbReference type="NCBI Taxonomy" id="93061"/>
    <lineage>
        <taxon>Bacteria</taxon>
        <taxon>Bacillati</taxon>
        <taxon>Bacillota</taxon>
        <taxon>Bacilli</taxon>
        <taxon>Bacillales</taxon>
        <taxon>Staphylococcaceae</taxon>
        <taxon>Staphylococcus</taxon>
    </lineage>
</organism>
<sequence>MKNNKISGFQWAMTIFVFFVITMALSIMLRDFQSIIGVKHFIFEVTDLAPLIAAIICILVFKYKKVQLAGLKFSISLKVIERLLLALILPLIILIIGMYSFNTFADSFILLQSTGLSVPITHILIGHILMAFVVEFGFRSYLQNIVETKMNTFFASIVVGLMYSVFSANTTYGTEFAAYNFLYTFSFSMILGELIRATKGRTIYIATTFHASMTFGLIFLFSEEIGDLFSIKVIAISTAIVAVGYIGLSLIIRGIAYLTTRRNLEELEPNNYLDHVNDDEETNHTEAEKSSSNIKDAEKTGVATASTVGVAKNDTENTVADEPSIHEGTEKTEPQHHIGNQTESNHDEDHDITSESVESAESVKQAPQSDDLTNDSNEDEIEQSLKEPATYKEDRRSSVVIDAEKHIEKTEEQSSDKNK</sequence>
<accession>Q2FVT1</accession>
<keyword id="KW-0002">3D-structure</keyword>
<keyword id="KW-1003">Cell membrane</keyword>
<keyword id="KW-0134">Cell wall</keyword>
<keyword id="KW-0472">Membrane</keyword>
<keyword id="KW-1185">Reference proteome</keyword>
<keyword id="KW-0964">Secreted</keyword>
<keyword id="KW-0812">Transmembrane</keyword>
<keyword id="KW-1133">Transmembrane helix</keyword>
<proteinExistence type="evidence at protein level"/>
<comment type="function">
    <text evidence="1 5 6">Involved in bacterial cell envelope homeostasis (PubMed:29543889). Regulates peptidoglycan processing by N-acetylglucosaminidase SagB, perhaps acting as a scaffold protein (PubMed:33168989). Pleiotropic regulator of gene expression, probably acting via interactions with multiple two-component systems (PubMed:29543889). Plays a role in the abundant deposition of the immunoglobulin G-binding protein A (spa) at the cross-wall, a subcellular structure that initially arises from cytokinesis (By similarity). Probable virulence factor (PubMed:29543889).</text>
</comment>
<comment type="subunit">
    <text evidence="5 6">Interacts with N-acetylglucosaminidase SagB; interaction is direct and facilitates peptidoglycan processing (PubMed:33168989). Interacts (via N-terminal region including transmembrane domains) with sensor protein kinase WalK (via N-terminal region including transmembrane domains) (PubMed:29543889). Interacts (via N-terminal region including transmembrane domains) with sensor protein kinase SaeS (PubMed:29543889). Interacts with other histidine kinases, perhaps via their transmembrane domains (PubMed:29543889).</text>
</comment>
<comment type="subcellular location">
    <subcellularLocation>
        <location evidence="9">Cell membrane</location>
        <topology evidence="9">Multi-pass membrane protein</topology>
    </subcellularLocation>
    <subcellularLocation>
        <location evidence="1">Secreted</location>
        <location evidence="1">Cell wall</location>
    </subcellularLocation>
    <subcellularLocation>
        <location evidence="5">Cell septum</location>
    </subcellularLocation>
    <text evidence="1">Localization to the cross-wall is enriched in dividing cells.</text>
</comment>
<comment type="induction">
    <text evidence="5">Up-regulated by the two-component regulatory system WalK-WalR.</text>
</comment>
<comment type="domain">
    <text evidence="6">C-terminal region not involved in glucosaminidase activity of the SagB-SpdC/LyrA complex.</text>
</comment>
<comment type="disruption phenotype">
    <text evidence="4 5 6">Abolishes normal short glycan strand length (PubMed:33168989). Reduces biofilm formation (PubMed:29543889). Cells show an increase in lysostaphin resistance, without a concomitant decrease in beta-lactam resistance (PubMed:16923896). However, mutants are also reported to show an increase in lysostaphin resistance and a decrease in resistance to the beta lactam oxacillin and to an antibiotic targeting biosynthesis of cell wall components, tunicamycin (PubMed:29543889). Minor defects in peptidoglycan and pentaglycine cross bridge structure (PubMed:16923896). Modulates expression of multiple genes, including known virulence factors; upregulates expression of members of the WalK-WalR regulon, including sceD, ssaA, lytM and atlA and downregulates expression of spa, hlgC and sdrD (PubMed:29543889). Attenuates virulence in RjOrl:SWISS strain mouse intravenous infection model of sepsis, by comparison with HG001 wild-type strain (PubMed:29543889).</text>
</comment>
<comment type="similarity">
    <text evidence="9">Belongs to the LyrA family.</text>
</comment>